<accession>P9WJI8</accession>
<accession>L0T9B3</accession>
<accession>Q10641</accession>
<evidence type="ECO:0000250" key="1"/>
<evidence type="ECO:0000250" key="2">
    <source>
        <dbReference type="UniProtKB" id="P22253"/>
    </source>
</evidence>
<evidence type="ECO:0000256" key="3">
    <source>
        <dbReference type="SAM" id="MobiDB-lite"/>
    </source>
</evidence>
<evidence type="ECO:0000305" key="4"/>
<organism>
    <name type="scientific">Mycobacterium tuberculosis (strain CDC 1551 / Oshkosh)</name>
    <dbReference type="NCBI Taxonomy" id="83331"/>
    <lineage>
        <taxon>Bacteria</taxon>
        <taxon>Bacillati</taxon>
        <taxon>Actinomycetota</taxon>
        <taxon>Actinomycetes</taxon>
        <taxon>Mycobacteriales</taxon>
        <taxon>Mycobacteriaceae</taxon>
        <taxon>Mycobacterium</taxon>
        <taxon>Mycobacterium tuberculosis complex</taxon>
    </lineage>
</organism>
<reference key="1">
    <citation type="journal article" date="2002" name="J. Bacteriol.">
        <title>Whole-genome comparison of Mycobacterium tuberculosis clinical and laboratory strains.</title>
        <authorList>
            <person name="Fleischmann R.D."/>
            <person name="Alland D."/>
            <person name="Eisen J.A."/>
            <person name="Carpenter L."/>
            <person name="White O."/>
            <person name="Peterson J.D."/>
            <person name="DeBoy R.T."/>
            <person name="Dodson R.J."/>
            <person name="Gwinn M.L."/>
            <person name="Haft D.H."/>
            <person name="Hickey E.K."/>
            <person name="Kolonay J.F."/>
            <person name="Nelson W.C."/>
            <person name="Umayam L.A."/>
            <person name="Ermolaeva M.D."/>
            <person name="Salzberg S.L."/>
            <person name="Delcher A."/>
            <person name="Utterback T.R."/>
            <person name="Weidman J.F."/>
            <person name="Khouri H.M."/>
            <person name="Gill J."/>
            <person name="Mikula A."/>
            <person name="Bishai W."/>
            <person name="Jacobs W.R. Jr."/>
            <person name="Venter J.C."/>
            <person name="Fraser C.M."/>
        </authorList>
    </citation>
    <scope>NUCLEOTIDE SEQUENCE [LARGE SCALE GENOMIC DNA]</scope>
    <source>
        <strain>CDC 1551 / Oshkosh</strain>
    </source>
</reference>
<feature type="chain" id="PRO_0000427822" description="Nicotinate phosphoribosyltransferase pncB1">
    <location>
        <begin position="1"/>
        <end position="448"/>
    </location>
</feature>
<feature type="region of interest" description="Disordered" evidence="3">
    <location>
        <begin position="1"/>
        <end position="21"/>
    </location>
</feature>
<feature type="region of interest" description="Disordered" evidence="3">
    <location>
        <begin position="353"/>
        <end position="372"/>
    </location>
</feature>
<feature type="modified residue" description="Phosphohistidine" evidence="2">
    <location>
        <position position="212"/>
    </location>
</feature>
<proteinExistence type="inferred from homology"/>
<protein>
    <recommendedName>
        <fullName>Nicotinate phosphoribosyltransferase pncB1</fullName>
        <shortName>NAPRTase pncB1</shortName>
        <ecNumber>6.3.4.21</ecNumber>
    </recommendedName>
</protein>
<dbReference type="EC" id="6.3.4.21"/>
<dbReference type="EMBL" id="AE000516">
    <property type="protein sequence ID" value="AAK45636.1"/>
    <property type="molecule type" value="Genomic_DNA"/>
</dbReference>
<dbReference type="PIR" id="F70770">
    <property type="entry name" value="F70770"/>
</dbReference>
<dbReference type="RefSeq" id="WP_003900321.1">
    <property type="nucleotide sequence ID" value="NZ_KK341227.1"/>
</dbReference>
<dbReference type="SMR" id="P9WJI8"/>
<dbReference type="KEGG" id="mtc:MT1372"/>
<dbReference type="PATRIC" id="fig|83331.31.peg.1479"/>
<dbReference type="HOGENOM" id="CLU_025154_3_0_11"/>
<dbReference type="UniPathway" id="UPA00253">
    <property type="reaction ID" value="UER00457"/>
</dbReference>
<dbReference type="Proteomes" id="UP000001020">
    <property type="component" value="Chromosome"/>
</dbReference>
<dbReference type="GO" id="GO:0005829">
    <property type="term" value="C:cytosol"/>
    <property type="evidence" value="ECO:0007669"/>
    <property type="project" value="TreeGrafter"/>
</dbReference>
<dbReference type="GO" id="GO:0004516">
    <property type="term" value="F:nicotinate phosphoribosyltransferase activity"/>
    <property type="evidence" value="ECO:0007669"/>
    <property type="project" value="UniProtKB-EC"/>
</dbReference>
<dbReference type="GO" id="GO:0016740">
    <property type="term" value="F:transferase activity"/>
    <property type="evidence" value="ECO:0007669"/>
    <property type="project" value="UniProtKB-KW"/>
</dbReference>
<dbReference type="GO" id="GO:0034355">
    <property type="term" value="P:NAD biosynthetic process via the salvage pathway"/>
    <property type="evidence" value="ECO:0007669"/>
    <property type="project" value="TreeGrafter"/>
</dbReference>
<dbReference type="FunFam" id="3.20.20.70:FF:000076">
    <property type="entry name" value="Nicotinate phosphoribosyltransferase"/>
    <property type="match status" value="1"/>
</dbReference>
<dbReference type="Gene3D" id="3.20.20.70">
    <property type="entry name" value="Aldolase class I"/>
    <property type="match status" value="1"/>
</dbReference>
<dbReference type="Gene3D" id="3.20.140.10">
    <property type="entry name" value="nicotinate phosphoribosyltransferase"/>
    <property type="match status" value="1"/>
</dbReference>
<dbReference type="InterPro" id="IPR013785">
    <property type="entry name" value="Aldolase_TIM"/>
</dbReference>
<dbReference type="InterPro" id="IPR041525">
    <property type="entry name" value="N/Namide_PRibTrfase"/>
</dbReference>
<dbReference type="InterPro" id="IPR040727">
    <property type="entry name" value="NAPRTase_N"/>
</dbReference>
<dbReference type="InterPro" id="IPR007229">
    <property type="entry name" value="Nic_PRibTrfase-Fam"/>
</dbReference>
<dbReference type="InterPro" id="IPR006405">
    <property type="entry name" value="Nic_PRibTrfase_pncB"/>
</dbReference>
<dbReference type="InterPro" id="IPR036068">
    <property type="entry name" value="Nicotinate_pribotase-like_C"/>
</dbReference>
<dbReference type="NCBIfam" id="TIGR01513">
    <property type="entry name" value="NAPRTase_put"/>
    <property type="match status" value="1"/>
</dbReference>
<dbReference type="NCBIfam" id="NF006698">
    <property type="entry name" value="PRK09243.1-5"/>
    <property type="match status" value="1"/>
</dbReference>
<dbReference type="PANTHER" id="PTHR11098">
    <property type="entry name" value="NICOTINATE PHOSPHORIBOSYLTRANSFERASE"/>
    <property type="match status" value="1"/>
</dbReference>
<dbReference type="PANTHER" id="PTHR11098:SF8">
    <property type="entry name" value="NICOTINATE PHOSPHORIBOSYLTRANSFERASE PNCB1"/>
    <property type="match status" value="1"/>
</dbReference>
<dbReference type="Pfam" id="PF04095">
    <property type="entry name" value="NAPRTase"/>
    <property type="match status" value="1"/>
</dbReference>
<dbReference type="Pfam" id="PF17767">
    <property type="entry name" value="NAPRTase_N"/>
    <property type="match status" value="1"/>
</dbReference>
<dbReference type="PIRSF" id="PIRSF000484">
    <property type="entry name" value="NAPRT"/>
    <property type="match status" value="1"/>
</dbReference>
<dbReference type="SUPFAM" id="SSF51690">
    <property type="entry name" value="Nicotinate/Quinolinate PRTase C-terminal domain-like"/>
    <property type="match status" value="1"/>
</dbReference>
<dbReference type="SUPFAM" id="SSF54675">
    <property type="entry name" value="Nicotinate/Quinolinate PRTase N-terminal domain-like"/>
    <property type="match status" value="1"/>
</dbReference>
<sequence>MGPPPAARRREGEPDNQDPAGLLTDKYELTMLAAALRDGSANRPTTFEVFARRLPTGRRYGVVAGTGRLLEALPQFRFDADACELLAQFLDPATVRYLREFRFRGDIDGYAEGELYFPGSPVLSVRGSFAECVLLETLVLSIFNHDTAIASAAARMVSAAGGRPLIEMGSRRTHERAAVAAARAAYIAGFAASSNLAAQRRYGVPAHGTAAHAFTMLHAQHGGPTELAERAAFRAQVEALGPGTTLLVDTYDVTTGVANAVAAAGAELGAIRIDSGELGVLARQAREQLDRLGATRTRIVVSGDLDEFSIAALRGEPVDSYGVGTSLVTGSGAPTANMVYKLVEVDGVPVQKRSSYKESPGGRKEALRRSRATGTITEELVHPAGRPPVIVEPHRVLTLPLVRAGQPVADTSLAAARQLVASGLRSLPADGLKLAPGEPAIPTRTIPA</sequence>
<comment type="function">
    <text evidence="1">Involved in the Preiss-Handler pathway, which is a recycling route that permits the salvage of free nicotinamide (NM) and nicotinic acid (Na) involved in the NAD biosynthesis. Catalyzes the synthesis of beta-nicotinate D-ribonucleotide from nicotinate and 5-phospho-D-ribose 1-phosphate at the expense of ATP. It is not able to use nicotinamide. PncB1 contributes to basal NAD level (By similarity).</text>
</comment>
<comment type="catalytic activity">
    <reaction>
        <text>nicotinate + 5-phospho-alpha-D-ribose 1-diphosphate + ATP + H2O = nicotinate beta-D-ribonucleotide + ADP + phosphate + diphosphate</text>
        <dbReference type="Rhea" id="RHEA:36163"/>
        <dbReference type="ChEBI" id="CHEBI:15377"/>
        <dbReference type="ChEBI" id="CHEBI:30616"/>
        <dbReference type="ChEBI" id="CHEBI:32544"/>
        <dbReference type="ChEBI" id="CHEBI:33019"/>
        <dbReference type="ChEBI" id="CHEBI:43474"/>
        <dbReference type="ChEBI" id="CHEBI:57502"/>
        <dbReference type="ChEBI" id="CHEBI:58017"/>
        <dbReference type="ChEBI" id="CHEBI:456216"/>
        <dbReference type="EC" id="6.3.4.21"/>
    </reaction>
</comment>
<comment type="pathway">
    <text>Cofactor biosynthesis; NAD(+) biosynthesis; nicotinate D-ribonucleotide from nicotinate: step 1/1.</text>
</comment>
<comment type="PTM">
    <text evidence="2">Transiently phosphorylated on a His residue during the reaction cycle. Phosphorylation strongly increases the affinity for substrates and increases the rate of nicotinate D-ribonucleotide production. Dephosphorylation regenerates the low-affinity form of the enzyme, leading to product release.</text>
</comment>
<comment type="similarity">
    <text evidence="4">Belongs to the NAPRTase family.</text>
</comment>
<keyword id="KW-0436">Ligase</keyword>
<keyword id="KW-0597">Phosphoprotein</keyword>
<keyword id="KW-0662">Pyridine nucleotide biosynthesis</keyword>
<keyword id="KW-1185">Reference proteome</keyword>
<keyword id="KW-0808">Transferase</keyword>
<name>PNCB1_MYCTO</name>
<gene>
    <name type="primary">pncB1</name>
    <name type="ordered locus">MT1372</name>
</gene>